<sequence>MPSLLIIVLIIHVVTYLINTIGANTIDSLLWLLYLKLPNQTSQTADEQRRLKREVMQLKREMNATSSQDEFAKWAKLRRRHDKTMEEYEAKNKALGKHKSSFDLAVKSVRFFSTTGLKLFLQFWFSKTPIFELPRGWIPWQVEWVLSFPRAPLGTVSIQIWGGVCATVVSLAGDAIGVVNVYLTSKAPKQKEPATSGENSARPMAIKKEL</sequence>
<feature type="chain" id="PRO_0000388590" description="Protein GET1">
    <location>
        <begin position="1"/>
        <end position="210"/>
    </location>
</feature>
<feature type="topological domain" description="Lumenal" evidence="1">
    <location>
        <begin position="1"/>
        <end position="4"/>
    </location>
</feature>
<feature type="transmembrane region" description="Helical" evidence="1">
    <location>
        <begin position="5"/>
        <end position="24"/>
    </location>
</feature>
<feature type="topological domain" description="Cytoplasmic" evidence="1">
    <location>
        <begin position="25"/>
        <end position="110"/>
    </location>
</feature>
<feature type="transmembrane region" description="Helical" evidence="1">
    <location>
        <begin position="111"/>
        <end position="131"/>
    </location>
</feature>
<feature type="topological domain" description="Lumenal" evidence="1">
    <location>
        <begin position="132"/>
        <end position="155"/>
    </location>
</feature>
<feature type="transmembrane region" description="Helical" evidence="1">
    <location>
        <begin position="156"/>
        <end position="172"/>
    </location>
</feature>
<feature type="topological domain" description="Cytoplasmic" evidence="1">
    <location>
        <begin position="173"/>
        <end position="210"/>
    </location>
</feature>
<feature type="region of interest" description="Disordered" evidence="2">
    <location>
        <begin position="189"/>
        <end position="210"/>
    </location>
</feature>
<feature type="coiled-coil region" evidence="1">
    <location>
        <begin position="39"/>
        <end position="95"/>
    </location>
</feature>
<evidence type="ECO:0000255" key="1">
    <source>
        <dbReference type="HAMAP-Rule" id="MF_03113"/>
    </source>
</evidence>
<evidence type="ECO:0000256" key="2">
    <source>
        <dbReference type="SAM" id="MobiDB-lite"/>
    </source>
</evidence>
<organism>
    <name type="scientific">Coccidioides posadasii (strain C735)</name>
    <name type="common">Valley fever fungus</name>
    <dbReference type="NCBI Taxonomy" id="222929"/>
    <lineage>
        <taxon>Eukaryota</taxon>
        <taxon>Fungi</taxon>
        <taxon>Dikarya</taxon>
        <taxon>Ascomycota</taxon>
        <taxon>Pezizomycotina</taxon>
        <taxon>Eurotiomycetes</taxon>
        <taxon>Eurotiomycetidae</taxon>
        <taxon>Onygenales</taxon>
        <taxon>Onygenaceae</taxon>
        <taxon>Coccidioides</taxon>
    </lineage>
</organism>
<proteinExistence type="inferred from homology"/>
<gene>
    <name evidence="1" type="primary">GET1</name>
    <name type="ORF">CPC735_002340</name>
</gene>
<keyword id="KW-0175">Coiled coil</keyword>
<keyword id="KW-0256">Endoplasmic reticulum</keyword>
<keyword id="KW-0472">Membrane</keyword>
<keyword id="KW-0812">Transmembrane</keyword>
<keyword id="KW-1133">Transmembrane helix</keyword>
<keyword id="KW-0813">Transport</keyword>
<accession>C5P8K5</accession>
<dbReference type="EMBL" id="ACFW01000030">
    <property type="protein sequence ID" value="EER26067.1"/>
    <property type="molecule type" value="Genomic_DNA"/>
</dbReference>
<dbReference type="RefSeq" id="XP_003068212.1">
    <property type="nucleotide sequence ID" value="XM_003068166.1"/>
</dbReference>
<dbReference type="SMR" id="C5P8K5"/>
<dbReference type="GeneID" id="9693695"/>
<dbReference type="KEGG" id="cpw:9693695"/>
<dbReference type="VEuPathDB" id="FungiDB:CPC735_002340"/>
<dbReference type="HOGENOM" id="CLU_089418_1_0_1"/>
<dbReference type="OrthoDB" id="69461at2759"/>
<dbReference type="Proteomes" id="UP000009084">
    <property type="component" value="Unassembled WGS sequence"/>
</dbReference>
<dbReference type="GO" id="GO:0005789">
    <property type="term" value="C:endoplasmic reticulum membrane"/>
    <property type="evidence" value="ECO:0007669"/>
    <property type="project" value="UniProtKB-SubCell"/>
</dbReference>
<dbReference type="GO" id="GO:0043529">
    <property type="term" value="C:GET complex"/>
    <property type="evidence" value="ECO:0007669"/>
    <property type="project" value="InterPro"/>
</dbReference>
<dbReference type="GO" id="GO:0043495">
    <property type="term" value="F:protein-membrane adaptor activity"/>
    <property type="evidence" value="ECO:0007669"/>
    <property type="project" value="TreeGrafter"/>
</dbReference>
<dbReference type="GO" id="GO:0071816">
    <property type="term" value="P:tail-anchored membrane protein insertion into ER membrane"/>
    <property type="evidence" value="ECO:0007669"/>
    <property type="project" value="InterPro"/>
</dbReference>
<dbReference type="FunFam" id="1.10.287.660:FF:000006">
    <property type="entry name" value="Protein GET1"/>
    <property type="match status" value="1"/>
</dbReference>
<dbReference type="Gene3D" id="1.10.287.660">
    <property type="entry name" value="Helix hairpin bin"/>
    <property type="match status" value="1"/>
</dbReference>
<dbReference type="HAMAP" id="MF_03113">
    <property type="entry name" value="Get1"/>
    <property type="match status" value="1"/>
</dbReference>
<dbReference type="InterPro" id="IPR028945">
    <property type="entry name" value="Get1"/>
</dbReference>
<dbReference type="InterPro" id="IPR027538">
    <property type="entry name" value="Get1_fungi"/>
</dbReference>
<dbReference type="InterPro" id="IPR029012">
    <property type="entry name" value="Helix_hairpin_bin_sf"/>
</dbReference>
<dbReference type="PANTHER" id="PTHR42650:SF1">
    <property type="entry name" value="GUIDED ENTRY OF TAIL-ANCHORED PROTEINS FACTOR 1"/>
    <property type="match status" value="1"/>
</dbReference>
<dbReference type="PANTHER" id="PTHR42650">
    <property type="entry name" value="TAIL-ANCHORED PROTEIN INSERTION RECEPTOR WRB"/>
    <property type="match status" value="1"/>
</dbReference>
<dbReference type="Pfam" id="PF04420">
    <property type="entry name" value="CHD5"/>
    <property type="match status" value="1"/>
</dbReference>
<comment type="function">
    <text evidence="1">Required for the post-translational delivery of tail-anchored (TA) proteins to the endoplasmic reticulum. Acts as a membrane receptor for soluble GET3, which recognizes and selectively binds the transmembrane domain of TA proteins in the cytosol.</text>
</comment>
<comment type="subunit">
    <text evidence="1">Interacts with GET3.</text>
</comment>
<comment type="subcellular location">
    <subcellularLocation>
        <location evidence="1">Endoplasmic reticulum membrane</location>
        <topology evidence="1">Multi-pass membrane protein</topology>
    </subcellularLocation>
</comment>
<comment type="similarity">
    <text evidence="1">Belongs to the WRB/GET1 family.</text>
</comment>
<reference key="1">
    <citation type="journal article" date="2009" name="Genome Res.">
        <title>Comparative genomic analyses of the human fungal pathogens Coccidioides and their relatives.</title>
        <authorList>
            <person name="Sharpton T.J."/>
            <person name="Stajich J.E."/>
            <person name="Rounsley S.D."/>
            <person name="Gardner M.J."/>
            <person name="Wortman J.R."/>
            <person name="Jordar V.S."/>
            <person name="Maiti R."/>
            <person name="Kodira C.D."/>
            <person name="Neafsey D.E."/>
            <person name="Zeng Q."/>
            <person name="Hung C.-Y."/>
            <person name="McMahan C."/>
            <person name="Muszewska A."/>
            <person name="Grynberg M."/>
            <person name="Mandel M.A."/>
            <person name="Kellner E.M."/>
            <person name="Barker B.M."/>
            <person name="Galgiani J.N."/>
            <person name="Orbach M.J."/>
            <person name="Kirkland T.N."/>
            <person name="Cole G.T."/>
            <person name="Henn M.R."/>
            <person name="Birren B.W."/>
            <person name="Taylor J.W."/>
        </authorList>
    </citation>
    <scope>NUCLEOTIDE SEQUENCE [LARGE SCALE GENOMIC DNA]</scope>
    <source>
        <strain>C735</strain>
    </source>
</reference>
<protein>
    <recommendedName>
        <fullName evidence="1">Protein GET1</fullName>
    </recommendedName>
    <alternativeName>
        <fullName evidence="1">Guided entry of tail-anchored proteins 1</fullName>
    </alternativeName>
</protein>
<name>GET1_COCP7</name>